<sequence length="299" mass="34304">MKPDAHQVKQFLLNLQDTICQQLSAVDGAEFVEDSWQREAGGGGRSRVLRNGGVFEQAGVNFSHVHGEAMPASATAHRPELAGRSFEAMGVSLVVHPHNPYVPTSHANVRFFIAEKPGAEPVWWFGGGFDLTPFYGFEEDAIHWHRTARDLCLPFGEDVYPRYKKWCDEYFYLKHRNEQRGIGGLFFDDLNTPDFDHCFAFMQAVGKGYTDAYLPIVERRKAMAYGERERNFQLYRRGRYVEFNLVWDRGTLFGLQTGGRTESILMSMPPLVRWEYDYQPKDGSPEAALSEFIKVRDWV</sequence>
<proteinExistence type="inferred from homology"/>
<accession>Q0TF33</accession>
<comment type="function">
    <text evidence="1">Involved in the heme biosynthesis. Catalyzes the aerobic oxidative decarboxylation of propionate groups of rings A and B of coproporphyrinogen-III to yield the vinyl groups in protoporphyrinogen-IX.</text>
</comment>
<comment type="catalytic activity">
    <reaction evidence="1">
        <text>coproporphyrinogen III + O2 + 2 H(+) = protoporphyrinogen IX + 2 CO2 + 2 H2O</text>
        <dbReference type="Rhea" id="RHEA:18257"/>
        <dbReference type="ChEBI" id="CHEBI:15377"/>
        <dbReference type="ChEBI" id="CHEBI:15378"/>
        <dbReference type="ChEBI" id="CHEBI:15379"/>
        <dbReference type="ChEBI" id="CHEBI:16526"/>
        <dbReference type="ChEBI" id="CHEBI:57307"/>
        <dbReference type="ChEBI" id="CHEBI:57309"/>
        <dbReference type="EC" id="1.3.3.3"/>
    </reaction>
</comment>
<comment type="cofactor">
    <cofactor evidence="1">
        <name>Mn(2+)</name>
        <dbReference type="ChEBI" id="CHEBI:29035"/>
    </cofactor>
</comment>
<comment type="pathway">
    <text evidence="1">Porphyrin-containing compound metabolism; protoporphyrin-IX biosynthesis; protoporphyrinogen-IX from coproporphyrinogen-III (O2 route): step 1/1.</text>
</comment>
<comment type="subunit">
    <text evidence="1">Homodimer.</text>
</comment>
<comment type="subcellular location">
    <subcellularLocation>
        <location evidence="1">Cytoplasm</location>
    </subcellularLocation>
</comment>
<comment type="similarity">
    <text evidence="1">Belongs to the aerobic coproporphyrinogen-III oxidase family.</text>
</comment>
<dbReference type="EC" id="1.3.3.3" evidence="1"/>
<dbReference type="EMBL" id="CP000247">
    <property type="protein sequence ID" value="ABG70446.1"/>
    <property type="molecule type" value="Genomic_DNA"/>
</dbReference>
<dbReference type="RefSeq" id="WP_001298446.1">
    <property type="nucleotide sequence ID" value="NC_008253.1"/>
</dbReference>
<dbReference type="SMR" id="Q0TF33"/>
<dbReference type="KEGG" id="ecp:ECP_2457"/>
<dbReference type="HOGENOM" id="CLU_026169_0_1_6"/>
<dbReference type="UniPathway" id="UPA00251">
    <property type="reaction ID" value="UER00322"/>
</dbReference>
<dbReference type="Proteomes" id="UP000009182">
    <property type="component" value="Chromosome"/>
</dbReference>
<dbReference type="GO" id="GO:0005737">
    <property type="term" value="C:cytoplasm"/>
    <property type="evidence" value="ECO:0007669"/>
    <property type="project" value="UniProtKB-SubCell"/>
</dbReference>
<dbReference type="GO" id="GO:0004109">
    <property type="term" value="F:coproporphyrinogen oxidase activity"/>
    <property type="evidence" value="ECO:0007669"/>
    <property type="project" value="UniProtKB-UniRule"/>
</dbReference>
<dbReference type="GO" id="GO:0030145">
    <property type="term" value="F:manganese ion binding"/>
    <property type="evidence" value="ECO:0007669"/>
    <property type="project" value="UniProtKB-UniRule"/>
</dbReference>
<dbReference type="GO" id="GO:0042803">
    <property type="term" value="F:protein homodimerization activity"/>
    <property type="evidence" value="ECO:0000250"/>
    <property type="project" value="UniProtKB"/>
</dbReference>
<dbReference type="GO" id="GO:0006782">
    <property type="term" value="P:protoporphyrinogen IX biosynthetic process"/>
    <property type="evidence" value="ECO:0007669"/>
    <property type="project" value="UniProtKB-UniRule"/>
</dbReference>
<dbReference type="FunFam" id="3.40.1500.10:FF:000001">
    <property type="entry name" value="Oxygen-dependent coproporphyrinogen-III oxidase"/>
    <property type="match status" value="1"/>
</dbReference>
<dbReference type="Gene3D" id="3.40.1500.10">
    <property type="entry name" value="Coproporphyrinogen III oxidase, aerobic"/>
    <property type="match status" value="1"/>
</dbReference>
<dbReference type="HAMAP" id="MF_00333">
    <property type="entry name" value="Coprogen_oxidas"/>
    <property type="match status" value="1"/>
</dbReference>
<dbReference type="InterPro" id="IPR001260">
    <property type="entry name" value="Coprogen_oxidase_aer"/>
</dbReference>
<dbReference type="InterPro" id="IPR036406">
    <property type="entry name" value="Coprogen_oxidase_aer_sf"/>
</dbReference>
<dbReference type="InterPro" id="IPR018375">
    <property type="entry name" value="Coprogen_oxidase_CS"/>
</dbReference>
<dbReference type="NCBIfam" id="NF003727">
    <property type="entry name" value="PRK05330.1"/>
    <property type="match status" value="1"/>
</dbReference>
<dbReference type="PANTHER" id="PTHR10755">
    <property type="entry name" value="COPROPORPHYRINOGEN III OXIDASE, MITOCHONDRIAL"/>
    <property type="match status" value="1"/>
</dbReference>
<dbReference type="PANTHER" id="PTHR10755:SF0">
    <property type="entry name" value="OXYGEN-DEPENDENT COPROPORPHYRINOGEN-III OXIDASE, MITOCHONDRIAL"/>
    <property type="match status" value="1"/>
</dbReference>
<dbReference type="Pfam" id="PF01218">
    <property type="entry name" value="Coprogen_oxidas"/>
    <property type="match status" value="1"/>
</dbReference>
<dbReference type="PIRSF" id="PIRSF000166">
    <property type="entry name" value="Coproporphyri_ox"/>
    <property type="match status" value="1"/>
</dbReference>
<dbReference type="PRINTS" id="PR00073">
    <property type="entry name" value="COPRGNOXDASE"/>
</dbReference>
<dbReference type="SUPFAM" id="SSF102886">
    <property type="entry name" value="Coproporphyrinogen III oxidase"/>
    <property type="match status" value="1"/>
</dbReference>
<dbReference type="PROSITE" id="PS01021">
    <property type="entry name" value="COPROGEN_OXIDASE"/>
    <property type="match status" value="1"/>
</dbReference>
<protein>
    <recommendedName>
        <fullName evidence="1">Oxygen-dependent coproporphyrinogen-III oxidase</fullName>
        <shortName evidence="1">CPO</shortName>
        <shortName evidence="1">Coprogen oxidase</shortName>
        <shortName evidence="1">Coproporphyrinogenase</shortName>
        <ecNumber evidence="1">1.3.3.3</ecNumber>
    </recommendedName>
</protein>
<name>HEM6_ECOL5</name>
<gene>
    <name evidence="1" type="primary">hemF</name>
    <name type="ordered locus">ECP_2457</name>
</gene>
<evidence type="ECO:0000255" key="1">
    <source>
        <dbReference type="HAMAP-Rule" id="MF_00333"/>
    </source>
</evidence>
<reference key="1">
    <citation type="journal article" date="2006" name="Mol. Microbiol.">
        <title>Role of pathogenicity island-associated integrases in the genome plasticity of uropathogenic Escherichia coli strain 536.</title>
        <authorList>
            <person name="Hochhut B."/>
            <person name="Wilde C."/>
            <person name="Balling G."/>
            <person name="Middendorf B."/>
            <person name="Dobrindt U."/>
            <person name="Brzuszkiewicz E."/>
            <person name="Gottschalk G."/>
            <person name="Carniel E."/>
            <person name="Hacker J."/>
        </authorList>
    </citation>
    <scope>NUCLEOTIDE SEQUENCE [LARGE SCALE GENOMIC DNA]</scope>
    <source>
        <strain>536 / UPEC</strain>
    </source>
</reference>
<keyword id="KW-0963">Cytoplasm</keyword>
<keyword id="KW-0350">Heme biosynthesis</keyword>
<keyword id="KW-0464">Manganese</keyword>
<keyword id="KW-0479">Metal-binding</keyword>
<keyword id="KW-0560">Oxidoreductase</keyword>
<keyword id="KW-0627">Porphyrin biosynthesis</keyword>
<organism>
    <name type="scientific">Escherichia coli O6:K15:H31 (strain 536 / UPEC)</name>
    <dbReference type="NCBI Taxonomy" id="362663"/>
    <lineage>
        <taxon>Bacteria</taxon>
        <taxon>Pseudomonadati</taxon>
        <taxon>Pseudomonadota</taxon>
        <taxon>Gammaproteobacteria</taxon>
        <taxon>Enterobacterales</taxon>
        <taxon>Enterobacteriaceae</taxon>
        <taxon>Escherichia</taxon>
    </lineage>
</organism>
<feature type="chain" id="PRO_1000019469" description="Oxygen-dependent coproporphyrinogen-III oxidase">
    <location>
        <begin position="1"/>
        <end position="299"/>
    </location>
</feature>
<feature type="region of interest" description="Important for dimerization" evidence="1">
    <location>
        <begin position="240"/>
        <end position="275"/>
    </location>
</feature>
<feature type="active site" description="Proton donor" evidence="1">
    <location>
        <position position="106"/>
    </location>
</feature>
<feature type="binding site" evidence="1">
    <location>
        <position position="92"/>
    </location>
    <ligand>
        <name>substrate</name>
    </ligand>
</feature>
<feature type="binding site" evidence="1">
    <location>
        <position position="96"/>
    </location>
    <ligand>
        <name>Mn(2+)</name>
        <dbReference type="ChEBI" id="CHEBI:29035"/>
    </ligand>
</feature>
<feature type="binding site" evidence="1">
    <location>
        <position position="106"/>
    </location>
    <ligand>
        <name>Mn(2+)</name>
        <dbReference type="ChEBI" id="CHEBI:29035"/>
    </ligand>
</feature>
<feature type="binding site" evidence="1">
    <location>
        <begin position="108"/>
        <end position="110"/>
    </location>
    <ligand>
        <name>substrate</name>
    </ligand>
</feature>
<feature type="binding site" evidence="1">
    <location>
        <position position="145"/>
    </location>
    <ligand>
        <name>Mn(2+)</name>
        <dbReference type="ChEBI" id="CHEBI:29035"/>
    </ligand>
</feature>
<feature type="binding site" evidence="1">
    <location>
        <position position="175"/>
    </location>
    <ligand>
        <name>Mn(2+)</name>
        <dbReference type="ChEBI" id="CHEBI:29035"/>
    </ligand>
</feature>
<feature type="binding site" evidence="1">
    <location>
        <begin position="258"/>
        <end position="260"/>
    </location>
    <ligand>
        <name>substrate</name>
    </ligand>
</feature>
<feature type="site" description="Important for dimerization" evidence="1">
    <location>
        <position position="175"/>
    </location>
</feature>